<evidence type="ECO:0000255" key="1">
    <source>
        <dbReference type="HAMAP-Rule" id="MF_00145"/>
    </source>
</evidence>
<feature type="chain" id="PRO_1000203347" description="Phosphoglycerate kinase">
    <location>
        <begin position="1"/>
        <end position="400"/>
    </location>
</feature>
<feature type="binding site" evidence="1">
    <location>
        <begin position="23"/>
        <end position="25"/>
    </location>
    <ligand>
        <name>substrate</name>
    </ligand>
</feature>
<feature type="binding site" evidence="1">
    <location>
        <position position="38"/>
    </location>
    <ligand>
        <name>substrate</name>
    </ligand>
</feature>
<feature type="binding site" evidence="1">
    <location>
        <begin position="61"/>
        <end position="64"/>
    </location>
    <ligand>
        <name>substrate</name>
    </ligand>
</feature>
<feature type="binding site" evidence="1">
    <location>
        <position position="120"/>
    </location>
    <ligand>
        <name>substrate</name>
    </ligand>
</feature>
<feature type="binding site" evidence="1">
    <location>
        <position position="153"/>
    </location>
    <ligand>
        <name>substrate</name>
    </ligand>
</feature>
<feature type="binding site" evidence="1">
    <location>
        <position position="203"/>
    </location>
    <ligand>
        <name>ATP</name>
        <dbReference type="ChEBI" id="CHEBI:30616"/>
    </ligand>
</feature>
<feature type="binding site" evidence="1">
    <location>
        <position position="325"/>
    </location>
    <ligand>
        <name>ATP</name>
        <dbReference type="ChEBI" id="CHEBI:30616"/>
    </ligand>
</feature>
<feature type="binding site" evidence="1">
    <location>
        <begin position="355"/>
        <end position="358"/>
    </location>
    <ligand>
        <name>ATP</name>
        <dbReference type="ChEBI" id="CHEBI:30616"/>
    </ligand>
</feature>
<gene>
    <name evidence="1" type="primary">pgk</name>
    <name type="ordered locus">Rleg2_3241</name>
</gene>
<accession>B5ZPA0</accession>
<organism>
    <name type="scientific">Rhizobium leguminosarum bv. trifolii (strain WSM2304)</name>
    <dbReference type="NCBI Taxonomy" id="395492"/>
    <lineage>
        <taxon>Bacteria</taxon>
        <taxon>Pseudomonadati</taxon>
        <taxon>Pseudomonadota</taxon>
        <taxon>Alphaproteobacteria</taxon>
        <taxon>Hyphomicrobiales</taxon>
        <taxon>Rhizobiaceae</taxon>
        <taxon>Rhizobium/Agrobacterium group</taxon>
        <taxon>Rhizobium</taxon>
    </lineage>
</organism>
<name>PGK_RHILW</name>
<reference key="1">
    <citation type="journal article" date="2010" name="Stand. Genomic Sci.">
        <title>Complete genome sequence of Rhizobium leguminosarum bv trifolii strain WSM2304, an effective microsymbiont of the South American clover Trifolium polymorphum.</title>
        <authorList>
            <person name="Reeve W."/>
            <person name="O'Hara G."/>
            <person name="Chain P."/>
            <person name="Ardley J."/>
            <person name="Brau L."/>
            <person name="Nandesena K."/>
            <person name="Tiwari R."/>
            <person name="Malfatti S."/>
            <person name="Kiss H."/>
            <person name="Lapidus A."/>
            <person name="Copeland A."/>
            <person name="Nolan M."/>
            <person name="Land M."/>
            <person name="Ivanova N."/>
            <person name="Mavromatis K."/>
            <person name="Markowitz V."/>
            <person name="Kyrpides N."/>
            <person name="Melino V."/>
            <person name="Denton M."/>
            <person name="Yates R."/>
            <person name="Howieson J."/>
        </authorList>
    </citation>
    <scope>NUCLEOTIDE SEQUENCE [LARGE SCALE GENOMIC DNA]</scope>
    <source>
        <strain>WSM2304</strain>
    </source>
</reference>
<keyword id="KW-0067">ATP-binding</keyword>
<keyword id="KW-0963">Cytoplasm</keyword>
<keyword id="KW-0324">Glycolysis</keyword>
<keyword id="KW-0418">Kinase</keyword>
<keyword id="KW-0547">Nucleotide-binding</keyword>
<keyword id="KW-1185">Reference proteome</keyword>
<keyword id="KW-0808">Transferase</keyword>
<comment type="catalytic activity">
    <reaction evidence="1">
        <text>(2R)-3-phosphoglycerate + ATP = (2R)-3-phospho-glyceroyl phosphate + ADP</text>
        <dbReference type="Rhea" id="RHEA:14801"/>
        <dbReference type="ChEBI" id="CHEBI:30616"/>
        <dbReference type="ChEBI" id="CHEBI:57604"/>
        <dbReference type="ChEBI" id="CHEBI:58272"/>
        <dbReference type="ChEBI" id="CHEBI:456216"/>
        <dbReference type="EC" id="2.7.2.3"/>
    </reaction>
</comment>
<comment type="pathway">
    <text evidence="1">Carbohydrate degradation; glycolysis; pyruvate from D-glyceraldehyde 3-phosphate: step 2/5.</text>
</comment>
<comment type="subunit">
    <text evidence="1">Monomer.</text>
</comment>
<comment type="subcellular location">
    <subcellularLocation>
        <location evidence="1">Cytoplasm</location>
    </subcellularLocation>
</comment>
<comment type="similarity">
    <text evidence="1">Belongs to the phosphoglycerate kinase family.</text>
</comment>
<sequence length="400" mass="41651">MPSFKTLDDLSDIRGKRVLVRVDLNVPVKDGKVTDTTRIERVAPTILELSEKGAKVILLAHFGRPKDGPSPELSLSLIAPSVEEVLDHAVSTASDCIGEAAASAVAAMNDGDILLLENTRFHKGEEKNDPDFTKALAANGDIYVNDAFSAAHRAHASTEGLAHHLPAYAGRTMQAELEALEKGLGDPARPVVAIVGGAKVSTKIDLLMNLVKKVDALVIGGGMANTFIAARGTNVGKSLCEHDLAETARQIMIEAATSGCAIILPEDGVIAREFKAGAANETVDIDAIPADAMVLDVGPKSVQAISAWIERASTLVWNGPLGAFEIEPFDAATVGAAKYAAERTTAGKLTSVAGGGDTVSALNHAGVADDFTYVSTAGGAFLEWMEGKELPGVAVLNAAR</sequence>
<dbReference type="EC" id="2.7.2.3" evidence="1"/>
<dbReference type="EMBL" id="CP001191">
    <property type="protein sequence ID" value="ACI56508.1"/>
    <property type="molecule type" value="Genomic_DNA"/>
</dbReference>
<dbReference type="RefSeq" id="WP_012558867.1">
    <property type="nucleotide sequence ID" value="NC_011369.1"/>
</dbReference>
<dbReference type="SMR" id="B5ZPA0"/>
<dbReference type="STRING" id="395492.Rleg2_3241"/>
<dbReference type="KEGG" id="rlt:Rleg2_3241"/>
<dbReference type="eggNOG" id="COG0126">
    <property type="taxonomic scope" value="Bacteria"/>
</dbReference>
<dbReference type="HOGENOM" id="CLU_025427_0_2_5"/>
<dbReference type="UniPathway" id="UPA00109">
    <property type="reaction ID" value="UER00185"/>
</dbReference>
<dbReference type="Proteomes" id="UP000008330">
    <property type="component" value="Chromosome"/>
</dbReference>
<dbReference type="GO" id="GO:0005829">
    <property type="term" value="C:cytosol"/>
    <property type="evidence" value="ECO:0007669"/>
    <property type="project" value="TreeGrafter"/>
</dbReference>
<dbReference type="GO" id="GO:0043531">
    <property type="term" value="F:ADP binding"/>
    <property type="evidence" value="ECO:0007669"/>
    <property type="project" value="TreeGrafter"/>
</dbReference>
<dbReference type="GO" id="GO:0005524">
    <property type="term" value="F:ATP binding"/>
    <property type="evidence" value="ECO:0007669"/>
    <property type="project" value="UniProtKB-KW"/>
</dbReference>
<dbReference type="GO" id="GO:0004618">
    <property type="term" value="F:phosphoglycerate kinase activity"/>
    <property type="evidence" value="ECO:0007669"/>
    <property type="project" value="UniProtKB-UniRule"/>
</dbReference>
<dbReference type="GO" id="GO:0006094">
    <property type="term" value="P:gluconeogenesis"/>
    <property type="evidence" value="ECO:0007669"/>
    <property type="project" value="TreeGrafter"/>
</dbReference>
<dbReference type="GO" id="GO:0006096">
    <property type="term" value="P:glycolytic process"/>
    <property type="evidence" value="ECO:0007669"/>
    <property type="project" value="UniProtKB-UniRule"/>
</dbReference>
<dbReference type="FunFam" id="3.40.50.1260:FF:000006">
    <property type="entry name" value="Phosphoglycerate kinase"/>
    <property type="match status" value="1"/>
</dbReference>
<dbReference type="FunFam" id="3.40.50.1260:FF:000031">
    <property type="entry name" value="Phosphoglycerate kinase 1"/>
    <property type="match status" value="1"/>
</dbReference>
<dbReference type="Gene3D" id="3.40.50.1260">
    <property type="entry name" value="Phosphoglycerate kinase, N-terminal domain"/>
    <property type="match status" value="2"/>
</dbReference>
<dbReference type="HAMAP" id="MF_00145">
    <property type="entry name" value="Phosphoglyc_kinase"/>
    <property type="match status" value="1"/>
</dbReference>
<dbReference type="InterPro" id="IPR001576">
    <property type="entry name" value="Phosphoglycerate_kinase"/>
</dbReference>
<dbReference type="InterPro" id="IPR015911">
    <property type="entry name" value="Phosphoglycerate_kinase_CS"/>
</dbReference>
<dbReference type="InterPro" id="IPR015824">
    <property type="entry name" value="Phosphoglycerate_kinase_N"/>
</dbReference>
<dbReference type="InterPro" id="IPR036043">
    <property type="entry name" value="Phosphoglycerate_kinase_sf"/>
</dbReference>
<dbReference type="PANTHER" id="PTHR11406">
    <property type="entry name" value="PHOSPHOGLYCERATE KINASE"/>
    <property type="match status" value="1"/>
</dbReference>
<dbReference type="PANTHER" id="PTHR11406:SF23">
    <property type="entry name" value="PHOSPHOGLYCERATE KINASE 1, CHLOROPLASTIC-RELATED"/>
    <property type="match status" value="1"/>
</dbReference>
<dbReference type="Pfam" id="PF00162">
    <property type="entry name" value="PGK"/>
    <property type="match status" value="1"/>
</dbReference>
<dbReference type="PIRSF" id="PIRSF000724">
    <property type="entry name" value="Pgk"/>
    <property type="match status" value="1"/>
</dbReference>
<dbReference type="PRINTS" id="PR00477">
    <property type="entry name" value="PHGLYCKINASE"/>
</dbReference>
<dbReference type="SUPFAM" id="SSF53748">
    <property type="entry name" value="Phosphoglycerate kinase"/>
    <property type="match status" value="1"/>
</dbReference>
<dbReference type="PROSITE" id="PS00111">
    <property type="entry name" value="PGLYCERATE_KINASE"/>
    <property type="match status" value="1"/>
</dbReference>
<proteinExistence type="inferred from homology"/>
<protein>
    <recommendedName>
        <fullName evidence="1">Phosphoglycerate kinase</fullName>
        <ecNumber evidence="1">2.7.2.3</ecNumber>
    </recommendedName>
</protein>